<evidence type="ECO:0000255" key="1">
    <source>
        <dbReference type="HAMAP-Rule" id="MF_00076"/>
    </source>
</evidence>
<feature type="chain" id="PRO_1000075255" description="Imidazoleglycerol-phosphate dehydratase">
    <location>
        <begin position="1"/>
        <end position="203"/>
    </location>
</feature>
<dbReference type="EC" id="4.2.1.19" evidence="1"/>
<dbReference type="EMBL" id="CP000667">
    <property type="protein sequence ID" value="ABP55628.1"/>
    <property type="molecule type" value="Genomic_DNA"/>
</dbReference>
<dbReference type="RefSeq" id="WP_012014405.1">
    <property type="nucleotide sequence ID" value="NC_009380.1"/>
</dbReference>
<dbReference type="SMR" id="A4X9Q4"/>
<dbReference type="STRING" id="369723.Strop_3194"/>
<dbReference type="KEGG" id="stp:Strop_3194"/>
<dbReference type="PATRIC" id="fig|369723.5.peg.3286"/>
<dbReference type="eggNOG" id="COG0131">
    <property type="taxonomic scope" value="Bacteria"/>
</dbReference>
<dbReference type="HOGENOM" id="CLU_044308_3_0_11"/>
<dbReference type="UniPathway" id="UPA00031">
    <property type="reaction ID" value="UER00011"/>
</dbReference>
<dbReference type="Proteomes" id="UP000000235">
    <property type="component" value="Chromosome"/>
</dbReference>
<dbReference type="GO" id="GO:0005737">
    <property type="term" value="C:cytoplasm"/>
    <property type="evidence" value="ECO:0007669"/>
    <property type="project" value="UniProtKB-SubCell"/>
</dbReference>
<dbReference type="GO" id="GO:0004424">
    <property type="term" value="F:imidazoleglycerol-phosphate dehydratase activity"/>
    <property type="evidence" value="ECO:0007669"/>
    <property type="project" value="UniProtKB-UniRule"/>
</dbReference>
<dbReference type="GO" id="GO:0000105">
    <property type="term" value="P:L-histidine biosynthetic process"/>
    <property type="evidence" value="ECO:0007669"/>
    <property type="project" value="UniProtKB-UniRule"/>
</dbReference>
<dbReference type="CDD" id="cd07914">
    <property type="entry name" value="IGPD"/>
    <property type="match status" value="1"/>
</dbReference>
<dbReference type="FunFam" id="3.30.230.40:FF:000001">
    <property type="entry name" value="Imidazoleglycerol-phosphate dehydratase HisB"/>
    <property type="match status" value="1"/>
</dbReference>
<dbReference type="FunFam" id="3.30.230.40:FF:000003">
    <property type="entry name" value="Imidazoleglycerol-phosphate dehydratase HisB"/>
    <property type="match status" value="1"/>
</dbReference>
<dbReference type="Gene3D" id="3.30.230.40">
    <property type="entry name" value="Imidazole glycerol phosphate dehydratase, domain 1"/>
    <property type="match status" value="2"/>
</dbReference>
<dbReference type="HAMAP" id="MF_00076">
    <property type="entry name" value="HisB"/>
    <property type="match status" value="1"/>
</dbReference>
<dbReference type="InterPro" id="IPR038494">
    <property type="entry name" value="IGPD_sf"/>
</dbReference>
<dbReference type="InterPro" id="IPR000807">
    <property type="entry name" value="ImidazoleglycerolP_deHydtase"/>
</dbReference>
<dbReference type="InterPro" id="IPR020565">
    <property type="entry name" value="ImidazoleglycerP_deHydtase_CS"/>
</dbReference>
<dbReference type="InterPro" id="IPR020568">
    <property type="entry name" value="Ribosomal_Su5_D2-typ_SF"/>
</dbReference>
<dbReference type="NCBIfam" id="NF002110">
    <property type="entry name" value="PRK00951.1-6"/>
    <property type="match status" value="1"/>
</dbReference>
<dbReference type="PANTHER" id="PTHR23133:SF2">
    <property type="entry name" value="IMIDAZOLEGLYCEROL-PHOSPHATE DEHYDRATASE"/>
    <property type="match status" value="1"/>
</dbReference>
<dbReference type="PANTHER" id="PTHR23133">
    <property type="entry name" value="IMIDAZOLEGLYCEROL-PHOSPHATE DEHYDRATASE HIS7"/>
    <property type="match status" value="1"/>
</dbReference>
<dbReference type="Pfam" id="PF00475">
    <property type="entry name" value="IGPD"/>
    <property type="match status" value="1"/>
</dbReference>
<dbReference type="SUPFAM" id="SSF54211">
    <property type="entry name" value="Ribosomal protein S5 domain 2-like"/>
    <property type="match status" value="2"/>
</dbReference>
<dbReference type="PROSITE" id="PS00954">
    <property type="entry name" value="IGP_DEHYDRATASE_1"/>
    <property type="match status" value="1"/>
</dbReference>
<organism>
    <name type="scientific">Salinispora tropica (strain ATCC BAA-916 / DSM 44818 / JCM 13857 / NBRC 105044 / CNB-440)</name>
    <dbReference type="NCBI Taxonomy" id="369723"/>
    <lineage>
        <taxon>Bacteria</taxon>
        <taxon>Bacillati</taxon>
        <taxon>Actinomycetota</taxon>
        <taxon>Actinomycetes</taxon>
        <taxon>Micromonosporales</taxon>
        <taxon>Micromonosporaceae</taxon>
        <taxon>Salinispora</taxon>
    </lineage>
</organism>
<sequence length="203" mass="22010">MSRTARVERVTKETKVLVEIDLDGSGKADIETGVGFYDHMLHQIARHGGFDLTVHTVGDLHIDAHHTMEDTALALGSAVDRALGDRAGIRRYGSATVPMDEVLVRAAVDISGRPYVVHDEPPLAPYIGPVYPTSMTRHVWESFGQSARVTLHVDVLRAARPGGHPDAHHVVEAQFKAVSRALREATAVDPRFTGVVPSTKGTL</sequence>
<proteinExistence type="inferred from homology"/>
<gene>
    <name evidence="1" type="primary">hisB</name>
    <name type="ordered locus">Strop_3194</name>
</gene>
<protein>
    <recommendedName>
        <fullName evidence="1">Imidazoleglycerol-phosphate dehydratase</fullName>
        <shortName evidence="1">IGPD</shortName>
        <ecNumber evidence="1">4.2.1.19</ecNumber>
    </recommendedName>
</protein>
<accession>A4X9Q4</accession>
<keyword id="KW-0028">Amino-acid biosynthesis</keyword>
<keyword id="KW-0963">Cytoplasm</keyword>
<keyword id="KW-0368">Histidine biosynthesis</keyword>
<keyword id="KW-0456">Lyase</keyword>
<keyword id="KW-1185">Reference proteome</keyword>
<reference key="1">
    <citation type="journal article" date="2007" name="Proc. Natl. Acad. Sci. U.S.A.">
        <title>Genome sequencing reveals complex secondary metabolome in the marine actinomycete Salinispora tropica.</title>
        <authorList>
            <person name="Udwary D.W."/>
            <person name="Zeigler L."/>
            <person name="Asolkar R.N."/>
            <person name="Singan V."/>
            <person name="Lapidus A."/>
            <person name="Fenical W."/>
            <person name="Jensen P.R."/>
            <person name="Moore B.S."/>
        </authorList>
    </citation>
    <scope>NUCLEOTIDE SEQUENCE [LARGE SCALE GENOMIC DNA]</scope>
    <source>
        <strain>ATCC BAA-916 / DSM 44818 / JCM 13857 / NBRC 105044 / CNB-440</strain>
    </source>
</reference>
<comment type="catalytic activity">
    <reaction evidence="1">
        <text>D-erythro-1-(imidazol-4-yl)glycerol 3-phosphate = 3-(imidazol-4-yl)-2-oxopropyl phosphate + H2O</text>
        <dbReference type="Rhea" id="RHEA:11040"/>
        <dbReference type="ChEBI" id="CHEBI:15377"/>
        <dbReference type="ChEBI" id="CHEBI:57766"/>
        <dbReference type="ChEBI" id="CHEBI:58278"/>
        <dbReference type="EC" id="4.2.1.19"/>
    </reaction>
</comment>
<comment type="pathway">
    <text evidence="1">Amino-acid biosynthesis; L-histidine biosynthesis; L-histidine from 5-phospho-alpha-D-ribose 1-diphosphate: step 6/9.</text>
</comment>
<comment type="subcellular location">
    <subcellularLocation>
        <location evidence="1">Cytoplasm</location>
    </subcellularLocation>
</comment>
<comment type="similarity">
    <text evidence="1">Belongs to the imidazoleglycerol-phosphate dehydratase family.</text>
</comment>
<name>HIS7_SALTO</name>